<protein>
    <recommendedName>
        <fullName evidence="1">Probable 2-(5''-triphosphoribosyl)-3'-dephosphocoenzyme-A synthase</fullName>
        <shortName evidence="1">2-(5''-triphosphoribosyl)-3'-dephospho-CoA synthase</shortName>
        <ecNumber evidence="1">2.4.2.52</ecNumber>
    </recommendedName>
</protein>
<name>CITG_STRE4</name>
<comment type="catalytic activity">
    <reaction evidence="1">
        <text>3'-dephospho-CoA + ATP = 2'-(5''-triphospho-alpha-D-ribosyl)-3'-dephospho-CoA + adenine</text>
        <dbReference type="Rhea" id="RHEA:15117"/>
        <dbReference type="ChEBI" id="CHEBI:16708"/>
        <dbReference type="ChEBI" id="CHEBI:30616"/>
        <dbReference type="ChEBI" id="CHEBI:57328"/>
        <dbReference type="ChEBI" id="CHEBI:61378"/>
        <dbReference type="EC" id="2.4.2.52"/>
    </reaction>
</comment>
<comment type="similarity">
    <text evidence="1">Belongs to the CitG/MdcB family.</text>
</comment>
<sequence length="294" mass="32440">MTKKVFDDISRLALKALLYEVSLSPKPGLVDQLDNGAHDDMSFLTFVDSALALAPFFKIYLDIGFYHAKEDPGLIFERLRASGIEAEQAMFSATKGVNTHKGVNFSLALLLGATGMYLADQPQLLDHVTAFTEEDSLAICQLVKPLTAHLLETDFGSLDLKKELTYGEKLFLDYGIKGPRGEASEGYPTIAHKALPFLRKSLRSTDQETAQLQLLVYLMSIVEDGNLIHRGGIKAWRQVKQDMLLLHNSSLSTADLKAALSAYNDKLIQKNLSPGGTADLLVLSLYFAFLENQL</sequence>
<proteinExistence type="inferred from homology"/>
<dbReference type="EC" id="2.4.2.52" evidence="1"/>
<dbReference type="EMBL" id="FM204883">
    <property type="protein sequence ID" value="CAW93926.1"/>
    <property type="molecule type" value="Genomic_DNA"/>
</dbReference>
<dbReference type="RefSeq" id="WP_012679586.1">
    <property type="nucleotide sequence ID" value="NC_012471.1"/>
</dbReference>
<dbReference type="KEGG" id="seu:SEQ_1208"/>
<dbReference type="HOGENOM" id="CLU_056179_1_0_9"/>
<dbReference type="OrthoDB" id="114886at2"/>
<dbReference type="Proteomes" id="UP000001365">
    <property type="component" value="Chromosome"/>
</dbReference>
<dbReference type="GO" id="GO:0005524">
    <property type="term" value="F:ATP binding"/>
    <property type="evidence" value="ECO:0007669"/>
    <property type="project" value="UniProtKB-KW"/>
</dbReference>
<dbReference type="GO" id="GO:0046917">
    <property type="term" value="F:triphosphoribosyl-dephospho-CoA synthase activity"/>
    <property type="evidence" value="ECO:0007669"/>
    <property type="project" value="UniProtKB-UniRule"/>
</dbReference>
<dbReference type="GO" id="GO:0051191">
    <property type="term" value="P:prosthetic group biosynthetic process"/>
    <property type="evidence" value="ECO:0007669"/>
    <property type="project" value="TreeGrafter"/>
</dbReference>
<dbReference type="Gene3D" id="1.10.4200.10">
    <property type="entry name" value="Triphosphoribosyl-dephospho-CoA protein"/>
    <property type="match status" value="1"/>
</dbReference>
<dbReference type="HAMAP" id="MF_00397">
    <property type="entry name" value="CitG"/>
    <property type="match status" value="1"/>
</dbReference>
<dbReference type="InterPro" id="IPR002736">
    <property type="entry name" value="CitG"/>
</dbReference>
<dbReference type="InterPro" id="IPR017551">
    <property type="entry name" value="TriPribosyl-deP-CoA_syn_CitG"/>
</dbReference>
<dbReference type="NCBIfam" id="TIGR03125">
    <property type="entry name" value="citrate_citG"/>
    <property type="match status" value="1"/>
</dbReference>
<dbReference type="PANTHER" id="PTHR30201:SF2">
    <property type="entry name" value="2-(5''-TRIPHOSPHORIBOSYL)-3'-DEPHOSPHOCOENZYME-A SYNTHASE"/>
    <property type="match status" value="1"/>
</dbReference>
<dbReference type="PANTHER" id="PTHR30201">
    <property type="entry name" value="TRIPHOSPHORIBOSYL-DEPHOSPHO-COA SYNTHASE"/>
    <property type="match status" value="1"/>
</dbReference>
<dbReference type="Pfam" id="PF01874">
    <property type="entry name" value="CitG"/>
    <property type="match status" value="1"/>
</dbReference>
<feature type="chain" id="PRO_1000189594" description="Probable 2-(5''-triphosphoribosyl)-3'-dephosphocoenzyme-A synthase">
    <location>
        <begin position="1"/>
        <end position="294"/>
    </location>
</feature>
<organism>
    <name type="scientific">Streptococcus equi subsp. equi (strain 4047)</name>
    <dbReference type="NCBI Taxonomy" id="553482"/>
    <lineage>
        <taxon>Bacteria</taxon>
        <taxon>Bacillati</taxon>
        <taxon>Bacillota</taxon>
        <taxon>Bacilli</taxon>
        <taxon>Lactobacillales</taxon>
        <taxon>Streptococcaceae</taxon>
        <taxon>Streptococcus</taxon>
    </lineage>
</organism>
<reference key="1">
    <citation type="journal article" date="2009" name="PLoS Pathog.">
        <title>Genomic evidence for the evolution of Streptococcus equi: host restriction, increased virulence, and genetic exchange with human pathogens.</title>
        <authorList>
            <person name="Holden M.T.G."/>
            <person name="Heather Z."/>
            <person name="Paillot R."/>
            <person name="Steward K.F."/>
            <person name="Webb K."/>
            <person name="Ainslie F."/>
            <person name="Jourdan T."/>
            <person name="Bason N.C."/>
            <person name="Holroyd N.E."/>
            <person name="Mungall K."/>
            <person name="Quail M.A."/>
            <person name="Sanders M."/>
            <person name="Simmonds M."/>
            <person name="Willey D."/>
            <person name="Brooks K."/>
            <person name="Aanensen D.M."/>
            <person name="Spratt B.G."/>
            <person name="Jolley K.A."/>
            <person name="Maiden M.C.J."/>
            <person name="Kehoe M."/>
            <person name="Chanter N."/>
            <person name="Bentley S.D."/>
            <person name="Robinson C."/>
            <person name="Maskell D.J."/>
            <person name="Parkhill J."/>
            <person name="Waller A.S."/>
        </authorList>
    </citation>
    <scope>NUCLEOTIDE SEQUENCE [LARGE SCALE GENOMIC DNA]</scope>
    <source>
        <strain>4047</strain>
    </source>
</reference>
<keyword id="KW-0067">ATP-binding</keyword>
<keyword id="KW-0547">Nucleotide-binding</keyword>
<keyword id="KW-0808">Transferase</keyword>
<gene>
    <name evidence="1" type="primary">citG</name>
    <name type="ordered locus">SEQ_1208</name>
</gene>
<evidence type="ECO:0000255" key="1">
    <source>
        <dbReference type="HAMAP-Rule" id="MF_00397"/>
    </source>
</evidence>
<accession>C0M6C1</accession>